<dbReference type="EMBL" id="Z15088">
    <property type="protein sequence ID" value="CAA78796.1"/>
    <property type="molecule type" value="Genomic_DNA"/>
</dbReference>
<dbReference type="PIR" id="S32954">
    <property type="entry name" value="S32954"/>
</dbReference>
<dbReference type="SMR" id="Q02998"/>
<dbReference type="GO" id="GO:0005737">
    <property type="term" value="C:cytoplasm"/>
    <property type="evidence" value="ECO:0007669"/>
    <property type="project" value="InterPro"/>
</dbReference>
<dbReference type="GO" id="GO:0000156">
    <property type="term" value="F:phosphorelay response regulator activity"/>
    <property type="evidence" value="ECO:0007669"/>
    <property type="project" value="InterPro"/>
</dbReference>
<dbReference type="GO" id="GO:0008984">
    <property type="term" value="F:protein-glutamate methylesterase activity"/>
    <property type="evidence" value="ECO:0007669"/>
    <property type="project" value="InterPro"/>
</dbReference>
<dbReference type="GO" id="GO:0008757">
    <property type="term" value="F:S-adenosylmethionine-dependent methyltransferase activity"/>
    <property type="evidence" value="ECO:0007669"/>
    <property type="project" value="InterPro"/>
</dbReference>
<dbReference type="GO" id="GO:0006935">
    <property type="term" value="P:chemotaxis"/>
    <property type="evidence" value="ECO:0007669"/>
    <property type="project" value="InterPro"/>
</dbReference>
<dbReference type="CDD" id="cd16434">
    <property type="entry name" value="CheB-CheR_fusion"/>
    <property type="match status" value="1"/>
</dbReference>
<dbReference type="CDD" id="cd00130">
    <property type="entry name" value="PAS"/>
    <property type="match status" value="1"/>
</dbReference>
<dbReference type="Gene3D" id="3.40.50.180">
    <property type="entry name" value="Methylesterase CheB, C-terminal domain"/>
    <property type="match status" value="1"/>
</dbReference>
<dbReference type="Gene3D" id="3.30.450.20">
    <property type="entry name" value="PAS domain"/>
    <property type="match status" value="2"/>
</dbReference>
<dbReference type="Gene3D" id="3.40.50.150">
    <property type="entry name" value="Vaccinia Virus protein VP39"/>
    <property type="match status" value="1"/>
</dbReference>
<dbReference type="InterPro" id="IPR050903">
    <property type="entry name" value="Bact_Chemotaxis_MeTrfase"/>
</dbReference>
<dbReference type="InterPro" id="IPR035909">
    <property type="entry name" value="CheB_C"/>
</dbReference>
<dbReference type="InterPro" id="IPR022642">
    <property type="entry name" value="CheR_C"/>
</dbReference>
<dbReference type="InterPro" id="IPR000780">
    <property type="entry name" value="CheR_MeTrfase"/>
</dbReference>
<dbReference type="InterPro" id="IPR022641">
    <property type="entry name" value="CheR_N"/>
</dbReference>
<dbReference type="InterPro" id="IPR000014">
    <property type="entry name" value="PAS"/>
</dbReference>
<dbReference type="InterPro" id="IPR035965">
    <property type="entry name" value="PAS-like_dom_sf"/>
</dbReference>
<dbReference type="InterPro" id="IPR013656">
    <property type="entry name" value="PAS_4"/>
</dbReference>
<dbReference type="InterPro" id="IPR029063">
    <property type="entry name" value="SAM-dependent_MTases_sf"/>
</dbReference>
<dbReference type="InterPro" id="IPR000673">
    <property type="entry name" value="Sig_transdc_resp-reg_Me-estase"/>
</dbReference>
<dbReference type="PANTHER" id="PTHR24422">
    <property type="entry name" value="CHEMOTAXIS PROTEIN METHYLTRANSFERASE"/>
    <property type="match status" value="1"/>
</dbReference>
<dbReference type="PANTHER" id="PTHR24422:SF27">
    <property type="entry name" value="PROTEIN-GLUTAMATE O-METHYLTRANSFERASE"/>
    <property type="match status" value="1"/>
</dbReference>
<dbReference type="Pfam" id="PF01339">
    <property type="entry name" value="CheB_methylest"/>
    <property type="match status" value="1"/>
</dbReference>
<dbReference type="Pfam" id="PF01739">
    <property type="entry name" value="CheR"/>
    <property type="match status" value="1"/>
</dbReference>
<dbReference type="Pfam" id="PF03705">
    <property type="entry name" value="CheR_N"/>
    <property type="match status" value="1"/>
</dbReference>
<dbReference type="Pfam" id="PF13596">
    <property type="entry name" value="PAS_10"/>
    <property type="match status" value="1"/>
</dbReference>
<dbReference type="Pfam" id="PF08448">
    <property type="entry name" value="PAS_4"/>
    <property type="match status" value="1"/>
</dbReference>
<dbReference type="PRINTS" id="PR00996">
    <property type="entry name" value="CHERMTFRASE"/>
</dbReference>
<dbReference type="SMART" id="SM00138">
    <property type="entry name" value="MeTrc"/>
    <property type="match status" value="1"/>
</dbReference>
<dbReference type="SMART" id="SM00091">
    <property type="entry name" value="PAS"/>
    <property type="match status" value="2"/>
</dbReference>
<dbReference type="SUPFAM" id="SSF47757">
    <property type="entry name" value="Chemotaxis receptor methyltransferase CheR, N-terminal domain"/>
    <property type="match status" value="1"/>
</dbReference>
<dbReference type="SUPFAM" id="SSF52738">
    <property type="entry name" value="Methylesterase CheB, C-terminal domain"/>
    <property type="match status" value="1"/>
</dbReference>
<dbReference type="SUPFAM" id="SSF55785">
    <property type="entry name" value="PYP-like sensor domain (PAS domain)"/>
    <property type="match status" value="2"/>
</dbReference>
<dbReference type="SUPFAM" id="SSF53335">
    <property type="entry name" value="S-adenosyl-L-methionine-dependent methyltransferases"/>
    <property type="match status" value="1"/>
</dbReference>
<dbReference type="PROSITE" id="PS50122">
    <property type="entry name" value="CHEB"/>
    <property type="match status" value="1"/>
</dbReference>
<dbReference type="PROSITE" id="PS50123">
    <property type="entry name" value="CHER"/>
    <property type="match status" value="1"/>
</dbReference>
<name>YH19_RHOCA</name>
<accession>Q02998</accession>
<reference key="1">
    <citation type="journal article" date="1993" name="Mol. Microbiol.">
        <title>Organization of the genes necessary for hydrogenase expression in Rhodobacter capsulatus. Sequence analysis and identification of two hyp regulatory mutants.</title>
        <authorList>
            <person name="Colbeau A."/>
            <person name="Richaud P."/>
            <person name="Toussaint B."/>
            <person name="Caballero F.J."/>
            <person name="Elster C."/>
            <person name="Delphin C."/>
            <person name="Smith R.L."/>
            <person name="Chabert J."/>
            <person name="Vignais P.M."/>
        </authorList>
    </citation>
    <scope>NUCLEOTIDE SEQUENCE [GENOMIC DNA]</scope>
    <source>
        <strain>ATCC 33303 / B10</strain>
    </source>
</reference>
<protein>
    <recommendedName>
        <fullName>Uncharacterized 104.1 kDa protein in hypE 3'region</fullName>
    </recommendedName>
    <alternativeName>
        <fullName>ORF19</fullName>
    </alternativeName>
</protein>
<feature type="chain" id="PRO_0000176047" description="Uncharacterized 104.1 kDa protein in hypE 3'region">
    <location>
        <begin position="1"/>
        <end position="952"/>
    </location>
</feature>
<feature type="domain" description="CheB-type methylesterase" evidence="1">
    <location>
        <begin position="1"/>
        <end position="141"/>
    </location>
</feature>
<feature type="domain" description="CheR-type methyltransferase" evidence="2">
    <location>
        <begin position="168"/>
        <end position="440"/>
    </location>
</feature>
<feature type="region of interest" description="Disordered" evidence="3">
    <location>
        <begin position="923"/>
        <end position="952"/>
    </location>
</feature>
<feature type="compositionally biased region" description="Polar residues" evidence="3">
    <location>
        <begin position="923"/>
        <end position="935"/>
    </location>
</feature>
<feature type="compositionally biased region" description="Gly residues" evidence="3">
    <location>
        <begin position="936"/>
        <end position="952"/>
    </location>
</feature>
<sequence length="952" mass="104046">MASLLARHTKMPVVTVEDEMELAADTVFLIPPATIMTLEGRHLRLAPKDRRVLSLPIDAFFTSMAAGFGSRAVAVVLSGTGSDGTRGVGAVHAAGGVAIAQDPRDARFDGMPRSAIATGFIDSALGIERIGPWIADYLIRRPRLGQLTGAERPDGATGVAVDDDRVAVGQFDGLEPAEALGRIVEILSLSGEVNFLDYKPGTVQRRIERRMGVRQVPDLTSYLELLTHDRTELASLRREMLIPVTSFFRDPDSFAELAEKVIDPLVAQAAVGSTLRVWTAGCATGEEAYTLAMLFFDAFERAGRWPTLKIFATDVEPMNIETAAAGFFAETIAADLPTTFLERFFTTRGGQYTIRPEIRQTIVFARHNLLSDPPFTRMDLVTCRNTLIYFRPEAQERALRRMHYAVRTGGYLFLGGSEALVQVQDDFSVLSARHRIWQALRPGAAPLTDRRAGLYVTPRPPATRRDNAPVTAVERGFATLSRTYAPPPALLVNSHHEILHSYGEVSRFMQMREGAASLEIGRMLVEPLLPVASALLFKSARLGEEAASDSIPIAEGILGPDPMRLRLRVVPVKQGTDSDEGRLYILAFEPDEGPDDGISGIDIDREVGARIEMLEAELAMTRESLQAMIEELETSNEELQATNEEMMASNEELQSANEELQSVNEELNSLNAEYQEKIDLLNRSNADLDSLTEIMAMSTIFVDSELTVTRFSPDAAELFRIRDVDVGRPLGDLTHRLDYPALLDDLRRTLQGQSRTEREVSGLNGRHYLVRMLPYRVPSSAAQGAVVTFVDITQTRNLQLLQAVIDGLAEHVAVLDGHGDILLVNAAWTRFAADNGDPGLAHTGVGTNYVGRCDIGEAAIDSGYAKRAVEGIRSVLTGKQRHFTMEYPCDAPGQPRWFVMHARPLDGARGGAVVSHIEITRWHNQTEASPETSSGGLPGSDGTGADGGAPRA</sequence>
<evidence type="ECO:0000255" key="1">
    <source>
        <dbReference type="PROSITE-ProRule" id="PRU00050"/>
    </source>
</evidence>
<evidence type="ECO:0000255" key="2">
    <source>
        <dbReference type="PROSITE-ProRule" id="PRU00051"/>
    </source>
</evidence>
<evidence type="ECO:0000256" key="3">
    <source>
        <dbReference type="SAM" id="MobiDB-lite"/>
    </source>
</evidence>
<proteinExistence type="predicted"/>
<organism>
    <name type="scientific">Rhodobacter capsulatus</name>
    <name type="common">Rhodopseudomonas capsulata</name>
    <dbReference type="NCBI Taxonomy" id="1061"/>
    <lineage>
        <taxon>Bacteria</taxon>
        <taxon>Pseudomonadati</taxon>
        <taxon>Pseudomonadota</taxon>
        <taxon>Alphaproteobacteria</taxon>
        <taxon>Rhodobacterales</taxon>
        <taxon>Rhodobacter group</taxon>
        <taxon>Rhodobacter</taxon>
    </lineage>
</organism>